<gene>
    <name evidence="1" type="primary">rplA</name>
    <name type="ordered locus">Suden_0350</name>
</gene>
<comment type="function">
    <text evidence="1">Binds directly to 23S rRNA. The L1 stalk is quite mobile in the ribosome, and is involved in E site tRNA release.</text>
</comment>
<comment type="function">
    <text evidence="1">Protein L1 is also a translational repressor protein, it controls the translation of the L11 operon by binding to its mRNA.</text>
</comment>
<comment type="subunit">
    <text evidence="1">Part of the 50S ribosomal subunit.</text>
</comment>
<comment type="similarity">
    <text evidence="1">Belongs to the universal ribosomal protein uL1 family.</text>
</comment>
<proteinExistence type="inferred from homology"/>
<feature type="chain" id="PRO_0000230649" description="Large ribosomal subunit protein uL1">
    <location>
        <begin position="1"/>
        <end position="230"/>
    </location>
</feature>
<dbReference type="EMBL" id="CP000153">
    <property type="protein sequence ID" value="ABB43631.1"/>
    <property type="molecule type" value="Genomic_DNA"/>
</dbReference>
<dbReference type="RefSeq" id="WP_011371985.1">
    <property type="nucleotide sequence ID" value="NC_007575.1"/>
</dbReference>
<dbReference type="SMR" id="Q30TQ0"/>
<dbReference type="STRING" id="326298.Suden_0350"/>
<dbReference type="KEGG" id="tdn:Suden_0350"/>
<dbReference type="eggNOG" id="COG0081">
    <property type="taxonomic scope" value="Bacteria"/>
</dbReference>
<dbReference type="HOGENOM" id="CLU_062853_0_0_7"/>
<dbReference type="OrthoDB" id="9803740at2"/>
<dbReference type="Proteomes" id="UP000002714">
    <property type="component" value="Chromosome"/>
</dbReference>
<dbReference type="GO" id="GO:0022625">
    <property type="term" value="C:cytosolic large ribosomal subunit"/>
    <property type="evidence" value="ECO:0007669"/>
    <property type="project" value="TreeGrafter"/>
</dbReference>
<dbReference type="GO" id="GO:0019843">
    <property type="term" value="F:rRNA binding"/>
    <property type="evidence" value="ECO:0007669"/>
    <property type="project" value="UniProtKB-UniRule"/>
</dbReference>
<dbReference type="GO" id="GO:0003735">
    <property type="term" value="F:structural constituent of ribosome"/>
    <property type="evidence" value="ECO:0007669"/>
    <property type="project" value="InterPro"/>
</dbReference>
<dbReference type="GO" id="GO:0000049">
    <property type="term" value="F:tRNA binding"/>
    <property type="evidence" value="ECO:0007669"/>
    <property type="project" value="UniProtKB-KW"/>
</dbReference>
<dbReference type="GO" id="GO:0006417">
    <property type="term" value="P:regulation of translation"/>
    <property type="evidence" value="ECO:0007669"/>
    <property type="project" value="UniProtKB-KW"/>
</dbReference>
<dbReference type="GO" id="GO:0006412">
    <property type="term" value="P:translation"/>
    <property type="evidence" value="ECO:0007669"/>
    <property type="project" value="UniProtKB-UniRule"/>
</dbReference>
<dbReference type="CDD" id="cd00403">
    <property type="entry name" value="Ribosomal_L1"/>
    <property type="match status" value="1"/>
</dbReference>
<dbReference type="FunFam" id="3.40.50.790:FF:000001">
    <property type="entry name" value="50S ribosomal protein L1"/>
    <property type="match status" value="1"/>
</dbReference>
<dbReference type="Gene3D" id="3.30.190.20">
    <property type="match status" value="1"/>
</dbReference>
<dbReference type="Gene3D" id="3.40.50.790">
    <property type="match status" value="1"/>
</dbReference>
<dbReference type="HAMAP" id="MF_01318_B">
    <property type="entry name" value="Ribosomal_uL1_B"/>
    <property type="match status" value="1"/>
</dbReference>
<dbReference type="InterPro" id="IPR005878">
    <property type="entry name" value="Ribosom_uL1_bac-type"/>
</dbReference>
<dbReference type="InterPro" id="IPR002143">
    <property type="entry name" value="Ribosomal_uL1"/>
</dbReference>
<dbReference type="InterPro" id="IPR023674">
    <property type="entry name" value="Ribosomal_uL1-like"/>
</dbReference>
<dbReference type="InterPro" id="IPR028364">
    <property type="entry name" value="Ribosomal_uL1/biogenesis"/>
</dbReference>
<dbReference type="InterPro" id="IPR016095">
    <property type="entry name" value="Ribosomal_uL1_3-a/b-sand"/>
</dbReference>
<dbReference type="InterPro" id="IPR023673">
    <property type="entry name" value="Ribosomal_uL1_CS"/>
</dbReference>
<dbReference type="NCBIfam" id="TIGR01169">
    <property type="entry name" value="rplA_bact"/>
    <property type="match status" value="1"/>
</dbReference>
<dbReference type="PANTHER" id="PTHR36427">
    <property type="entry name" value="54S RIBOSOMAL PROTEIN L1, MITOCHONDRIAL"/>
    <property type="match status" value="1"/>
</dbReference>
<dbReference type="PANTHER" id="PTHR36427:SF3">
    <property type="entry name" value="LARGE RIBOSOMAL SUBUNIT PROTEIN UL1M"/>
    <property type="match status" value="1"/>
</dbReference>
<dbReference type="Pfam" id="PF00687">
    <property type="entry name" value="Ribosomal_L1"/>
    <property type="match status" value="1"/>
</dbReference>
<dbReference type="PIRSF" id="PIRSF002155">
    <property type="entry name" value="Ribosomal_L1"/>
    <property type="match status" value="1"/>
</dbReference>
<dbReference type="SUPFAM" id="SSF56808">
    <property type="entry name" value="Ribosomal protein L1"/>
    <property type="match status" value="1"/>
</dbReference>
<dbReference type="PROSITE" id="PS01199">
    <property type="entry name" value="RIBOSOMAL_L1"/>
    <property type="match status" value="1"/>
</dbReference>
<accession>Q30TQ0</accession>
<sequence>MSKRYKQLTEKIDVTKAYSVDEASLLVKNLVSAKFDETVEVAFNLNVDPRHADQMIRGAIVLPHGTGKTVRVAVFAKGAKADEAKAAGADIVGTDDLVQQIKDGIFNFDIVVAAPDCMGLVGQIGRILGPKGMMPNPKTGTVTPDVATAVKNVKGGQVNFRVDKKGNIHAGIGKASFNADKISENLITFVKAINRHKPSSAKGRYIKNCALSLTMSPAIKLDVMQLADMK</sequence>
<evidence type="ECO:0000255" key="1">
    <source>
        <dbReference type="HAMAP-Rule" id="MF_01318"/>
    </source>
</evidence>
<evidence type="ECO:0000305" key="2"/>
<keyword id="KW-1185">Reference proteome</keyword>
<keyword id="KW-0678">Repressor</keyword>
<keyword id="KW-0687">Ribonucleoprotein</keyword>
<keyword id="KW-0689">Ribosomal protein</keyword>
<keyword id="KW-0694">RNA-binding</keyword>
<keyword id="KW-0699">rRNA-binding</keyword>
<keyword id="KW-0810">Translation regulation</keyword>
<keyword id="KW-0820">tRNA-binding</keyword>
<organism>
    <name type="scientific">Sulfurimonas denitrificans (strain ATCC 33889 / DSM 1251)</name>
    <name type="common">Thiomicrospira denitrificans (strain ATCC 33889 / DSM 1251)</name>
    <dbReference type="NCBI Taxonomy" id="326298"/>
    <lineage>
        <taxon>Bacteria</taxon>
        <taxon>Pseudomonadati</taxon>
        <taxon>Campylobacterota</taxon>
        <taxon>Epsilonproteobacteria</taxon>
        <taxon>Campylobacterales</taxon>
        <taxon>Sulfurimonadaceae</taxon>
        <taxon>Sulfurimonas</taxon>
    </lineage>
</organism>
<protein>
    <recommendedName>
        <fullName evidence="1">Large ribosomal subunit protein uL1</fullName>
    </recommendedName>
    <alternativeName>
        <fullName evidence="2">50S ribosomal protein L1</fullName>
    </alternativeName>
</protein>
<name>RL1_SULDN</name>
<reference key="1">
    <citation type="journal article" date="2008" name="Appl. Environ. Microbiol.">
        <title>Genome of the epsilonproteobacterial chemolithoautotroph Sulfurimonas denitrificans.</title>
        <authorList>
            <person name="Sievert S.M."/>
            <person name="Scott K.M."/>
            <person name="Klotz M.G."/>
            <person name="Chain P.S.G."/>
            <person name="Hauser L.J."/>
            <person name="Hemp J."/>
            <person name="Huegler M."/>
            <person name="Land M."/>
            <person name="Lapidus A."/>
            <person name="Larimer F.W."/>
            <person name="Lucas S."/>
            <person name="Malfatti S.A."/>
            <person name="Meyer F."/>
            <person name="Paulsen I.T."/>
            <person name="Ren Q."/>
            <person name="Simon J."/>
            <person name="Bailey K."/>
            <person name="Diaz E."/>
            <person name="Fitzpatrick K.A."/>
            <person name="Glover B."/>
            <person name="Gwatney N."/>
            <person name="Korajkic A."/>
            <person name="Long A."/>
            <person name="Mobberley J.M."/>
            <person name="Pantry S.N."/>
            <person name="Pazder G."/>
            <person name="Peterson S."/>
            <person name="Quintanilla J.D."/>
            <person name="Sprinkle R."/>
            <person name="Stephens J."/>
            <person name="Thomas P."/>
            <person name="Vaughn R."/>
            <person name="Weber M.J."/>
            <person name="Wooten L.L."/>
        </authorList>
    </citation>
    <scope>NUCLEOTIDE SEQUENCE [LARGE SCALE GENOMIC DNA]</scope>
    <source>
        <strain>ATCC 33889 / DSM 1251</strain>
    </source>
</reference>